<accession>Q28670</accession>
<accession>G1U677</accession>
<organism>
    <name type="scientific">Oryctolagus cuniculus</name>
    <name type="common">Rabbit</name>
    <dbReference type="NCBI Taxonomy" id="9986"/>
    <lineage>
        <taxon>Eukaryota</taxon>
        <taxon>Metazoa</taxon>
        <taxon>Chordata</taxon>
        <taxon>Craniata</taxon>
        <taxon>Vertebrata</taxon>
        <taxon>Euteleostomi</taxon>
        <taxon>Mammalia</taxon>
        <taxon>Eutheria</taxon>
        <taxon>Euarchontoglires</taxon>
        <taxon>Glires</taxon>
        <taxon>Lagomorpha</taxon>
        <taxon>Leporidae</taxon>
        <taxon>Oryctolagus</taxon>
    </lineage>
</organism>
<comment type="function">
    <text>This proteoglycan is a major component of extracellular matrix of cartilagenous tissues. A major function of this protein is to resist compression in cartilage. It binds avidly to hyaluronic acid via an N-terminal globular region. May play a regulatory role in the matrix assembly of the cartilage.</text>
</comment>
<comment type="subunit">
    <text evidence="4 5 6">Forms a complex (via covalent bonds) with MATN1; the interaction increases with age of the organism via an increase in occupancy of MATN1 binding sites (By similarity). Interacts with FBLN1 (By similarity). Interacts with COMP (By similarity).</text>
</comment>
<comment type="subcellular location">
    <subcellularLocation>
        <location evidence="3">Secreted</location>
        <location evidence="3">Extracellular space</location>
        <location evidence="3">Extracellular matrix</location>
    </subcellularLocation>
</comment>
<comment type="domain">
    <text>Two globular domains, G1 and G2, comprise the N-terminus of the proteoglycan, while another globular region, G3, makes up the C-terminus. G1 contains Link domains and thus consists of three disulfide-bonded loop structures designated as the A, B, B' motifs. G2 is similar to G1. The keratan sulfate (KS) and the chondroitin sulfate (CS) attachment domains lie between G2 and G3.</text>
</comment>
<comment type="PTM">
    <text evidence="1">Contains mostly chondroitin sulfate, but also keratan sulfate chains, N-linked and O-linked oligosaccharides.</text>
</comment>
<comment type="similarity">
    <text evidence="14">Belongs to the aggrecan/versican proteoglycan family.</text>
</comment>
<proteinExistence type="evidence at transcript level"/>
<keyword id="KW-0106">Calcium</keyword>
<keyword id="KW-1015">Disulfide bond</keyword>
<keyword id="KW-0272">Extracellular matrix</keyword>
<keyword id="KW-0325">Glycoprotein</keyword>
<keyword id="KW-0393">Immunoglobulin domain</keyword>
<keyword id="KW-0479">Metal-binding</keyword>
<keyword id="KW-0654">Proteoglycan</keyword>
<keyword id="KW-1185">Reference proteome</keyword>
<keyword id="KW-0677">Repeat</keyword>
<keyword id="KW-0964">Secreted</keyword>
<keyword id="KW-0732">Signal</keyword>
<name>PGCA_RABIT</name>
<protein>
    <recommendedName>
        <fullName>Aggrecan core protein</fullName>
    </recommendedName>
    <alternativeName>
        <fullName>Cartilage-specific proteoglycan core protein</fullName>
        <shortName>CSPCP</shortName>
    </alternativeName>
</protein>
<evidence type="ECO:0000250" key="1"/>
<evidence type="ECO:0000250" key="2">
    <source>
        <dbReference type="UniProtKB" id="P07897"/>
    </source>
</evidence>
<evidence type="ECO:0000250" key="3">
    <source>
        <dbReference type="UniProtKB" id="P07898"/>
    </source>
</evidence>
<evidence type="ECO:0000250" key="4">
    <source>
        <dbReference type="UniProtKB" id="P13608"/>
    </source>
</evidence>
<evidence type="ECO:0000250" key="5">
    <source>
        <dbReference type="UniProtKB" id="P16112"/>
    </source>
</evidence>
<evidence type="ECO:0000250" key="6">
    <source>
        <dbReference type="UniProtKB" id="Q61282"/>
    </source>
</evidence>
<evidence type="ECO:0000255" key="7"/>
<evidence type="ECO:0000255" key="8">
    <source>
        <dbReference type="PROSITE-ProRule" id="PRU00040"/>
    </source>
</evidence>
<evidence type="ECO:0000255" key="9">
    <source>
        <dbReference type="PROSITE-ProRule" id="PRU00076"/>
    </source>
</evidence>
<evidence type="ECO:0000255" key="10">
    <source>
        <dbReference type="PROSITE-ProRule" id="PRU00114"/>
    </source>
</evidence>
<evidence type="ECO:0000255" key="11">
    <source>
        <dbReference type="PROSITE-ProRule" id="PRU00302"/>
    </source>
</evidence>
<evidence type="ECO:0000255" key="12">
    <source>
        <dbReference type="PROSITE-ProRule" id="PRU00323"/>
    </source>
</evidence>
<evidence type="ECO:0000256" key="13">
    <source>
        <dbReference type="SAM" id="MobiDB-lite"/>
    </source>
</evidence>
<evidence type="ECO:0000305" key="14"/>
<reference key="1">
    <citation type="journal article" date="1995" name="Arthritis Rheum.">
        <title>Use of an antibody against the matrix metalloproteinase-generated aggrecan neoepitope FVDIPEN-COOH to assess the effects of stromelysin in a rabbit model of cartilage degradation.</title>
        <authorList>
            <person name="Bayne E.K."/>
            <person name="Macnaul K.L."/>
            <person name="Donatelli S.A."/>
            <person name="Christen A."/>
            <person name="Griffin P.R."/>
            <person name="Hoerrner L.A."/>
            <person name="Calaycay J.R."/>
            <person name="Ayala J.M."/>
            <person name="Chapman K."/>
            <person name="Hagmann W."/>
            <person name="Weidner J.R."/>
            <person name="McDonnel J."/>
            <person name="Moore V.L."/>
            <person name="Mumford R.A."/>
            <person name="Lark M.W."/>
            <person name="Hutchinson N.I."/>
        </authorList>
    </citation>
    <scope>NUCLEOTIDE SEQUENCE [MRNA] OF 65-458</scope>
    <source>
        <tissue>Cartilage</tissue>
    </source>
</reference>
<sequence length="2167" mass="222612">MTTLLLVLVALRVIAAAISGDVSDLDNALSVSIPQPSPVRALLGTSLTIPCYFIDPVHPVTTAPSTAPLTPRIKWSRISKDKEVVLLVANEGRVRINSAYQDKVSLPNYPAIPSDATLEIQSLRSNDSGIYRCEVMHGLEDSEATLEVVVKGVVFHYRAISTRYTLDFDRAQRACLQNSAIIATPEQLQAAYEDGFHQCDAGWLADQTVRYPIHTPREGCYGDKDEFPGVRTYGIRDTNETYDVYCFAEEMEGEVFYATSPEKFTFQEAASECRRLGARLATTGQLYLAWQAGMDMCSAGWLADRSVRYPISKARPNCGGNLLGVRTVYVHANQTGYPDPSSRYDAICYTGEDFMDIPENFFGVGGEEDITVQTVTWPDVELPVPRNITEGEARGSVVLTAKPVLDVSPTAPQPEETFAPGVGATAFPGVENGTEEATRPRGFADEATLGPSSATAFTSADLVVQVTAAPGVAEVPGQPRLPGGVVFHYRPGPTRYSLTFEEAQQACLRTGAAMASAEQLQAAYEAGYEQCDAGWLQDQTVRYPIVSPRTPCVGDKDSSPGVRTYGVRPPSETYDVYCYVDRLEGEVFFATRLEQFTFQEALEFCESHNATLASTGQLYAAWSRGLDRCYAGWLADGSLRYPIVTPRPACGGDKPGVRTVYLYPNQTGLPDPLSRHHAFCFRGTSEAPSPGPEEGGTATPASGLEDWIVTQVGPGVAATPRAEERTAVPSFATEPGNQTGWEAASSPVGTSLLPGIPPTWPPTGTAAEGTTEGLSTAAMPSASEGPYTPSSLVARETELPGLGVTSVPPDISGDLTSSGEASGLFGPTGQPLGGSASGLPSGELDSGSLTPTVGSGLPIGSGLASGDEDRIQWSSSTEVGGVTSGAEIPETSASGVGTDLSGLPSGAEIPETFASGVGTDLSGLPSGAEIPETFASGVGTDLSGLPSGAEILETSASGVGTDLSGLPSGAEILETSASGVGTDLSGLPSGAEILETSASGVGTDLSGLPSGAEIPETFASGVGTDLSGLPSGAEILETSASGVGTDLSGLPSGAEIPETSASGVGTDLSGLPSGAEILETSASGVGTDLSGLPSGAEILETSASGVGTDLSGLPSGAEILETSASGVGTDLSGLPSGAEILETSASGVGTDLSGLPSGAEILETSASGVGTDLSGLPSGGEIPETFASGVGDLSGLPPGREDLETLTSGVGDLSGLSSGKDGLVGSASGALDFGGTLGSGQIPETSGLPSGYSGEYSEVDLGSGPSSGLPDFSGLPSGFPTVSLVDTPLVEVVTATTARELEGRGTIGISGAGEISGLPSSELDVSGGTSGADISGEADVGGEASGLIVRGQPSGFPDTSGEAFGVTEVSGLSSGQPDLSGEASGVLFGSGPPFGITDLSGEPSGQPSGLPEFSGTTHRIPDLVSGATSGSGESSGIAFVDTSVVEVTPTTLREEEGLGSVEFSGFPSGETGLSGTPETIDVSGQSSGTIDSSGFTSLAPEVSGSPSGVAEVSGEASGTEITSGLPSGVFDSSGLPSGFPTVSLVDRTLVESVTQAPTAQEAEGPSDILELSGVHSGLPDVSGAHSGFLDPSGLQSGLVEPSGEPPRTPYFSGDFPSTPDVSGEASAATSSSGDISGLPEVTLVTSEFMEGVTRPTVSQELGQGPPMTHVPKLFESSGEALASGDTSGAAPAFPGSGLEASSVPESHGETSAYAEPGTKAAAAPDASGEASGSPDSGEITSVFREAAGEGASGLEVSSSSLASQQGPREGSASPEVSGESTTSYEIGTETSGLPLATPAASEDRAEVSGDLSGRTPVPVDVVTNVPEAEWIQHSQRPAEMWPETKSSSPSYSGEDTAGTAASPASADTPGEPGPTTAAPRSCAEEPCGPGTCQETEGRVTCLCPPGHTGEYCDIDIDECLSSPCVNGATCVDASDSFTCLCLPSYGGDLCETDQEVCEEGWTKFQGHCYRHFPDRETWVDAEGRCREQQSHLSSIVTPEEQEFVNNNAQDYQWIGLNDRTIEGDFRWSDGHPLQFENWRPNQPDNFFATGEDCVVMIWHEKGEWNDVPCNYHLPFTCKKGTVACGDPPVVEHARTFGQKKDRYEINSLVRYQCAEGFTQRHVPTIRCQPSGHWEEPRITCTHPTTYKRRVQKRSSRTLQRSQASSAP</sequence>
<feature type="signal peptide" evidence="7">
    <location>
        <begin position="1"/>
        <end position="16"/>
    </location>
</feature>
<feature type="chain" id="PRO_0000046692" description="Aggrecan core protein">
    <location>
        <begin position="17"/>
        <end position="2167"/>
    </location>
</feature>
<feature type="domain" description="Ig-like V-type" evidence="10">
    <location>
        <begin position="34"/>
        <end position="147"/>
    </location>
</feature>
<feature type="domain" description="Link 1" evidence="12">
    <location>
        <begin position="153"/>
        <end position="248"/>
    </location>
</feature>
<feature type="domain" description="Link 2" evidence="12">
    <location>
        <begin position="254"/>
        <end position="350"/>
    </location>
</feature>
<feature type="domain" description="Link 3" evidence="12">
    <location>
        <begin position="485"/>
        <end position="580"/>
    </location>
</feature>
<feature type="domain" description="Link 4" evidence="12">
    <location>
        <begin position="586"/>
        <end position="682"/>
    </location>
</feature>
<feature type="domain" description="EGF-like 1" evidence="9">
    <location>
        <begin position="1878"/>
        <end position="1913"/>
    </location>
</feature>
<feature type="domain" description="EGF-like 2; calcium-binding" evidence="9">
    <location>
        <begin position="1915"/>
        <end position="1951"/>
    </location>
</feature>
<feature type="domain" description="C-type lectin" evidence="8">
    <location>
        <begin position="1964"/>
        <end position="2078"/>
    </location>
</feature>
<feature type="domain" description="Sushi" evidence="11">
    <location>
        <begin position="2082"/>
        <end position="2142"/>
    </location>
</feature>
<feature type="region of interest" description="G1-A" evidence="5">
    <location>
        <begin position="48"/>
        <end position="141"/>
    </location>
</feature>
<feature type="region of interest" description="G1-B" evidence="5">
    <location>
        <begin position="152"/>
        <end position="247"/>
    </location>
</feature>
<feature type="region of interest" description="G1-B'" evidence="5">
    <location>
        <begin position="253"/>
        <end position="349"/>
    </location>
</feature>
<feature type="region of interest" description="G2-B" evidence="5">
    <location>
        <begin position="484"/>
        <end position="578"/>
    </location>
</feature>
<feature type="region of interest" description="G2-B'" evidence="5">
    <location>
        <begin position="585"/>
        <end position="680"/>
    </location>
</feature>
<feature type="region of interest" description="Disordered" evidence="13">
    <location>
        <begin position="682"/>
        <end position="701"/>
    </location>
</feature>
<feature type="region of interest" description="KS" evidence="5">
    <location>
        <begin position="684"/>
        <end position="794"/>
    </location>
</feature>
<feature type="region of interest" description="Disordered" evidence="13">
    <location>
        <begin position="717"/>
        <end position="770"/>
    </location>
</feature>
<feature type="region of interest" description="CS-1" evidence="5">
    <location>
        <begin position="797"/>
        <end position="1235"/>
    </location>
</feature>
<feature type="region of interest" description="Disordered" evidence="13">
    <location>
        <begin position="801"/>
        <end position="904"/>
    </location>
</feature>
<feature type="region of interest" description="Disordered" evidence="13">
    <location>
        <begin position="1042"/>
        <end position="1068"/>
    </location>
</feature>
<feature type="region of interest" description="CS-2" evidence="5">
    <location>
        <begin position="1236"/>
        <end position="1876"/>
    </location>
</feature>
<feature type="region of interest" description="Disordered" evidence="13">
    <location>
        <begin position="1312"/>
        <end position="1331"/>
    </location>
</feature>
<feature type="region of interest" description="Disordered" evidence="13">
    <location>
        <begin position="1582"/>
        <end position="1639"/>
    </location>
</feature>
<feature type="region of interest" description="Disordered" evidence="13">
    <location>
        <begin position="1678"/>
        <end position="1882"/>
    </location>
</feature>
<feature type="region of interest" description="G3" evidence="5">
    <location>
        <begin position="1877"/>
        <end position="2167"/>
    </location>
</feature>
<feature type="compositionally biased region" description="Low complexity" evidence="13">
    <location>
        <begin position="874"/>
        <end position="885"/>
    </location>
</feature>
<feature type="compositionally biased region" description="Low complexity" evidence="13">
    <location>
        <begin position="1720"/>
        <end position="1734"/>
    </location>
</feature>
<feature type="compositionally biased region" description="Low complexity" evidence="13">
    <location>
        <begin position="1748"/>
        <end position="1766"/>
    </location>
</feature>
<feature type="compositionally biased region" description="Polar residues" evidence="13">
    <location>
        <begin position="1778"/>
        <end position="1791"/>
    </location>
</feature>
<feature type="compositionally biased region" description="Low complexity" evidence="13">
    <location>
        <begin position="1815"/>
        <end position="1826"/>
    </location>
</feature>
<feature type="compositionally biased region" description="Polar residues" evidence="13">
    <location>
        <begin position="1844"/>
        <end position="1853"/>
    </location>
</feature>
<feature type="compositionally biased region" description="Low complexity" evidence="13">
    <location>
        <begin position="1868"/>
        <end position="1879"/>
    </location>
</feature>
<feature type="binding site" evidence="2">
    <location>
        <position position="2018"/>
    </location>
    <ligand>
        <name>Ca(2+)</name>
        <dbReference type="ChEBI" id="CHEBI:29108"/>
        <label>1</label>
    </ligand>
</feature>
<feature type="binding site" evidence="2">
    <location>
        <position position="2022"/>
    </location>
    <ligand>
        <name>Ca(2+)</name>
        <dbReference type="ChEBI" id="CHEBI:29108"/>
        <label>1</label>
    </ligand>
</feature>
<feature type="binding site" evidence="2">
    <location>
        <position position="2042"/>
    </location>
    <ligand>
        <name>Ca(2+)</name>
        <dbReference type="ChEBI" id="CHEBI:29108"/>
        <label>2</label>
    </ligand>
</feature>
<feature type="binding site" evidence="2">
    <location>
        <position position="2044"/>
    </location>
    <ligand>
        <name>Ca(2+)</name>
        <dbReference type="ChEBI" id="CHEBI:29108"/>
        <label>2</label>
    </ligand>
</feature>
<feature type="binding site" evidence="2">
    <location>
        <position position="2045"/>
    </location>
    <ligand>
        <name>Ca(2+)</name>
        <dbReference type="ChEBI" id="CHEBI:29108"/>
        <label>1</label>
    </ligand>
</feature>
<feature type="binding site" evidence="2">
    <location>
        <position position="2051"/>
    </location>
    <ligand>
        <name>Ca(2+)</name>
        <dbReference type="ChEBI" id="CHEBI:29108"/>
        <label>1</label>
    </ligand>
</feature>
<feature type="binding site" evidence="2">
    <location>
        <position position="2051"/>
    </location>
    <ligand>
        <name>Ca(2+)</name>
        <dbReference type="ChEBI" id="CHEBI:29108"/>
        <label>2</label>
    </ligand>
</feature>
<feature type="binding site" evidence="2">
    <location>
        <position position="2052"/>
    </location>
    <ligand>
        <name>Ca(2+)</name>
        <dbReference type="ChEBI" id="CHEBI:29108"/>
        <label>1</label>
    </ligand>
</feature>
<feature type="binding site" evidence="2">
    <location>
        <position position="2065"/>
    </location>
    <ligand>
        <name>Ca(2+)</name>
        <dbReference type="ChEBI" id="CHEBI:29108"/>
        <label>2</label>
    </ligand>
</feature>
<feature type="binding site" evidence="2">
    <location>
        <position position="2066"/>
    </location>
    <ligand>
        <name>Ca(2+)</name>
        <dbReference type="ChEBI" id="CHEBI:29108"/>
        <label>2</label>
    </ligand>
</feature>
<feature type="site" description="Cleavage; by aggrecanase" evidence="5">
    <location>
        <begin position="392"/>
        <end position="393"/>
    </location>
</feature>
<feature type="glycosylation site" description="N-linked (GlcNAc...) asparagine" evidence="7">
    <location>
        <position position="126"/>
    </location>
</feature>
<feature type="glycosylation site" description="N-linked (GlcNAc...) asparagine" evidence="7">
    <location>
        <position position="239"/>
    </location>
</feature>
<feature type="glycosylation site" description="N-linked (GlcNAc...) asparagine" evidence="7">
    <location>
        <position position="333"/>
    </location>
</feature>
<feature type="glycosylation site" description="N-linked (GlcNAc...) asparagine" evidence="7">
    <location>
        <position position="387"/>
    </location>
</feature>
<feature type="glycosylation site" description="N-linked (GlcNAc...) asparagine" evidence="7">
    <location>
        <position position="432"/>
    </location>
</feature>
<feature type="glycosylation site" description="N-linked (GlcNAc...) asparagine" evidence="7">
    <location>
        <position position="609"/>
    </location>
</feature>
<feature type="glycosylation site" description="N-linked (GlcNAc...) asparagine" evidence="7">
    <location>
        <position position="665"/>
    </location>
</feature>
<feature type="glycosylation site" description="N-linked (GlcNAc...) asparagine" evidence="7">
    <location>
        <position position="737"/>
    </location>
</feature>
<feature type="disulfide bond" evidence="10">
    <location>
        <begin position="51"/>
        <end position="133"/>
    </location>
</feature>
<feature type="disulfide bond" evidence="12">
    <location>
        <begin position="175"/>
        <end position="246"/>
    </location>
</feature>
<feature type="disulfide bond" evidence="12">
    <location>
        <begin position="199"/>
        <end position="220"/>
    </location>
</feature>
<feature type="disulfide bond" evidence="12">
    <location>
        <begin position="273"/>
        <end position="348"/>
    </location>
</feature>
<feature type="disulfide bond" evidence="12">
    <location>
        <begin position="297"/>
        <end position="318"/>
    </location>
</feature>
<feature type="disulfide bond" evidence="12">
    <location>
        <begin position="507"/>
        <end position="578"/>
    </location>
</feature>
<feature type="disulfide bond" evidence="12">
    <location>
        <begin position="531"/>
        <end position="552"/>
    </location>
</feature>
<feature type="disulfide bond" evidence="12">
    <location>
        <begin position="605"/>
        <end position="680"/>
    </location>
</feature>
<feature type="disulfide bond" evidence="12">
    <location>
        <begin position="629"/>
        <end position="650"/>
    </location>
</feature>
<feature type="disulfide bond" evidence="9">
    <location>
        <begin position="1882"/>
        <end position="1892"/>
    </location>
</feature>
<feature type="disulfide bond" evidence="9">
    <location>
        <begin position="1887"/>
        <end position="1901"/>
    </location>
</feature>
<feature type="disulfide bond" evidence="9">
    <location>
        <begin position="1903"/>
        <end position="1912"/>
    </location>
</feature>
<feature type="disulfide bond" evidence="9">
    <location>
        <begin position="1919"/>
        <end position="1930"/>
    </location>
</feature>
<feature type="disulfide bond" evidence="9">
    <location>
        <begin position="1924"/>
        <end position="1939"/>
    </location>
</feature>
<feature type="disulfide bond" evidence="9">
    <location>
        <begin position="1941"/>
        <end position="1950"/>
    </location>
</feature>
<feature type="disulfide bond" evidence="8">
    <location>
        <begin position="1985"/>
        <end position="2077"/>
    </location>
</feature>
<feature type="disulfide bond" evidence="8">
    <location>
        <begin position="2053"/>
        <end position="2069"/>
    </location>
</feature>
<feature type="disulfide bond" evidence="11">
    <location>
        <begin position="2084"/>
        <end position="2127"/>
    </location>
</feature>
<feature type="disulfide bond" evidence="11">
    <location>
        <begin position="2113"/>
        <end position="2140"/>
    </location>
</feature>
<feature type="sequence conflict" description="In Ref. 1; AAA91890." evidence="14" ref="1">
    <original>V</original>
    <variation>L</variation>
    <location>
        <position position="422"/>
    </location>
</feature>
<feature type="sequence conflict" description="In Ref. 1; AAA91890." evidence="14" ref="1">
    <original>T</original>
    <variation>A</variation>
    <location>
        <position position="448"/>
    </location>
</feature>
<dbReference type="EMBL" id="L38480">
    <property type="protein sequence ID" value="AAA91890.1"/>
    <property type="molecule type" value="mRNA"/>
</dbReference>
<dbReference type="RefSeq" id="XP_008249943.1">
    <property type="nucleotide sequence ID" value="XM_008251721.2"/>
</dbReference>
<dbReference type="SMR" id="Q28670"/>
<dbReference type="STRING" id="9986.ENSOCUP00000024918"/>
<dbReference type="GlyCosmos" id="Q28670">
    <property type="glycosylation" value="5 sites, No reported glycans"/>
</dbReference>
<dbReference type="PaxDb" id="9986-ENSOCUP00000024918"/>
<dbReference type="Ensembl" id="ENSOCUT00000026741.3">
    <property type="protein sequence ID" value="ENSOCUP00000024918.2"/>
    <property type="gene ID" value="ENSOCUG00000022093.3"/>
</dbReference>
<dbReference type="eggNOG" id="ENOG502QUX8">
    <property type="taxonomic scope" value="Eukaryota"/>
</dbReference>
<dbReference type="GeneTree" id="ENSGT00940000155971"/>
<dbReference type="HOGENOM" id="CLU_000303_2_0_1"/>
<dbReference type="InParanoid" id="Q28670"/>
<dbReference type="OMA" id="EDWIVTQ"/>
<dbReference type="TreeFam" id="TF332134"/>
<dbReference type="Proteomes" id="UP000001811">
    <property type="component" value="Unplaced"/>
</dbReference>
<dbReference type="Bgee" id="ENSOCUG00000022093">
    <property type="expression patterns" value="Expressed in embryo and 11 other cell types or tissues"/>
</dbReference>
<dbReference type="GO" id="GO:0005615">
    <property type="term" value="C:extracellular space"/>
    <property type="evidence" value="ECO:0007669"/>
    <property type="project" value="TreeGrafter"/>
</dbReference>
<dbReference type="GO" id="GO:0072534">
    <property type="term" value="C:perineuronal net"/>
    <property type="evidence" value="ECO:0007669"/>
    <property type="project" value="TreeGrafter"/>
</dbReference>
<dbReference type="GO" id="GO:0045202">
    <property type="term" value="C:synapse"/>
    <property type="evidence" value="ECO:0007669"/>
    <property type="project" value="TreeGrafter"/>
</dbReference>
<dbReference type="GO" id="GO:0005509">
    <property type="term" value="F:calcium ion binding"/>
    <property type="evidence" value="ECO:0007669"/>
    <property type="project" value="InterPro"/>
</dbReference>
<dbReference type="GO" id="GO:0005540">
    <property type="term" value="F:hyaluronic acid binding"/>
    <property type="evidence" value="ECO:0007669"/>
    <property type="project" value="InterPro"/>
</dbReference>
<dbReference type="GO" id="GO:0007155">
    <property type="term" value="P:cell adhesion"/>
    <property type="evidence" value="ECO:0007669"/>
    <property type="project" value="InterPro"/>
</dbReference>
<dbReference type="GO" id="GO:0007417">
    <property type="term" value="P:central nervous system development"/>
    <property type="evidence" value="ECO:0007669"/>
    <property type="project" value="TreeGrafter"/>
</dbReference>
<dbReference type="GO" id="GO:0010001">
    <property type="term" value="P:glial cell differentiation"/>
    <property type="evidence" value="ECO:0007669"/>
    <property type="project" value="TreeGrafter"/>
</dbReference>
<dbReference type="GO" id="GO:0002052">
    <property type="term" value="P:positive regulation of neuroblast proliferation"/>
    <property type="evidence" value="ECO:0007669"/>
    <property type="project" value="TreeGrafter"/>
</dbReference>
<dbReference type="GO" id="GO:0001501">
    <property type="term" value="P:skeletal system development"/>
    <property type="evidence" value="ECO:0007669"/>
    <property type="project" value="TreeGrafter"/>
</dbReference>
<dbReference type="CDD" id="cd00033">
    <property type="entry name" value="CCP"/>
    <property type="match status" value="1"/>
</dbReference>
<dbReference type="CDD" id="cd03588">
    <property type="entry name" value="CLECT_CSPGs"/>
    <property type="match status" value="1"/>
</dbReference>
<dbReference type="CDD" id="cd00054">
    <property type="entry name" value="EGF_CA"/>
    <property type="match status" value="2"/>
</dbReference>
<dbReference type="CDD" id="cd05900">
    <property type="entry name" value="Ig_Aggrecan"/>
    <property type="match status" value="1"/>
</dbReference>
<dbReference type="CDD" id="cd03517">
    <property type="entry name" value="Link_domain_CSPGs_modules_1_3"/>
    <property type="match status" value="2"/>
</dbReference>
<dbReference type="CDD" id="cd03520">
    <property type="entry name" value="Link_domain_CSPGs_modules_2_4"/>
    <property type="match status" value="2"/>
</dbReference>
<dbReference type="FunFam" id="3.10.100.10:FF:000009">
    <property type="entry name" value="Aggrecan core protein"/>
    <property type="match status" value="1"/>
</dbReference>
<dbReference type="FunFam" id="3.10.100.10:FF:000011">
    <property type="entry name" value="Aggrecan core protein"/>
    <property type="match status" value="1"/>
</dbReference>
<dbReference type="FunFam" id="2.60.40.10:FF:000451">
    <property type="entry name" value="aggrecan core protein"/>
    <property type="match status" value="1"/>
</dbReference>
<dbReference type="FunFam" id="3.10.100.10:FF:000002">
    <property type="entry name" value="Hyaluronan proteoglycan link protein 1"/>
    <property type="match status" value="2"/>
</dbReference>
<dbReference type="FunFam" id="2.10.25.10:FF:000472">
    <property type="entry name" value="Uncharacterized protein, isoform A"/>
    <property type="match status" value="1"/>
</dbReference>
<dbReference type="FunFam" id="2.10.70.10:FF:000003">
    <property type="entry name" value="Versican core protein"/>
    <property type="match status" value="1"/>
</dbReference>
<dbReference type="FunFam" id="3.10.100.10:FF:000003">
    <property type="entry name" value="Versican core protein"/>
    <property type="match status" value="1"/>
</dbReference>
<dbReference type="Gene3D" id="2.10.70.10">
    <property type="entry name" value="Complement Module, domain 1"/>
    <property type="match status" value="1"/>
</dbReference>
<dbReference type="Gene3D" id="2.60.40.10">
    <property type="entry name" value="Immunoglobulins"/>
    <property type="match status" value="1"/>
</dbReference>
<dbReference type="Gene3D" id="2.10.25.10">
    <property type="entry name" value="Laminin"/>
    <property type="match status" value="2"/>
</dbReference>
<dbReference type="Gene3D" id="3.10.100.10">
    <property type="entry name" value="Mannose-Binding Protein A, subunit A"/>
    <property type="match status" value="5"/>
</dbReference>
<dbReference type="InterPro" id="IPR001304">
    <property type="entry name" value="C-type_lectin-like"/>
</dbReference>
<dbReference type="InterPro" id="IPR016186">
    <property type="entry name" value="C-type_lectin-like/link_sf"/>
</dbReference>
<dbReference type="InterPro" id="IPR018378">
    <property type="entry name" value="C-type_lectin_CS"/>
</dbReference>
<dbReference type="InterPro" id="IPR033987">
    <property type="entry name" value="CSPG_CTLD"/>
</dbReference>
<dbReference type="InterPro" id="IPR016187">
    <property type="entry name" value="CTDL_fold"/>
</dbReference>
<dbReference type="InterPro" id="IPR001881">
    <property type="entry name" value="EGF-like_Ca-bd_dom"/>
</dbReference>
<dbReference type="InterPro" id="IPR000742">
    <property type="entry name" value="EGF-like_dom"/>
</dbReference>
<dbReference type="InterPro" id="IPR000152">
    <property type="entry name" value="EGF-type_Asp/Asn_hydroxyl_site"/>
</dbReference>
<dbReference type="InterPro" id="IPR018097">
    <property type="entry name" value="EGF_Ca-bd_CS"/>
</dbReference>
<dbReference type="InterPro" id="IPR050691">
    <property type="entry name" value="Hyaluronan_bind_Proteoglycan"/>
</dbReference>
<dbReference type="InterPro" id="IPR007110">
    <property type="entry name" value="Ig-like_dom"/>
</dbReference>
<dbReference type="InterPro" id="IPR036179">
    <property type="entry name" value="Ig-like_dom_sf"/>
</dbReference>
<dbReference type="InterPro" id="IPR013783">
    <property type="entry name" value="Ig-like_fold"/>
</dbReference>
<dbReference type="InterPro" id="IPR003006">
    <property type="entry name" value="Ig/MHC_CS"/>
</dbReference>
<dbReference type="InterPro" id="IPR003599">
    <property type="entry name" value="Ig_sub"/>
</dbReference>
<dbReference type="InterPro" id="IPR013106">
    <property type="entry name" value="Ig_V-set"/>
</dbReference>
<dbReference type="InterPro" id="IPR000538">
    <property type="entry name" value="Link_dom"/>
</dbReference>
<dbReference type="InterPro" id="IPR035976">
    <property type="entry name" value="Sushi/SCR/CCP_sf"/>
</dbReference>
<dbReference type="InterPro" id="IPR000436">
    <property type="entry name" value="Sushi_SCR_CCP_dom"/>
</dbReference>
<dbReference type="PANTHER" id="PTHR22804:SF42">
    <property type="entry name" value="AGGRECAN CORE PROTEIN"/>
    <property type="match status" value="1"/>
</dbReference>
<dbReference type="PANTHER" id="PTHR22804">
    <property type="entry name" value="AGGRECAN/VERSICAN PROTEOGLYCAN"/>
    <property type="match status" value="1"/>
</dbReference>
<dbReference type="Pfam" id="PF00008">
    <property type="entry name" value="EGF"/>
    <property type="match status" value="1"/>
</dbReference>
<dbReference type="Pfam" id="PF00059">
    <property type="entry name" value="Lectin_C"/>
    <property type="match status" value="1"/>
</dbReference>
<dbReference type="Pfam" id="PF00084">
    <property type="entry name" value="Sushi"/>
    <property type="match status" value="1"/>
</dbReference>
<dbReference type="Pfam" id="PF07686">
    <property type="entry name" value="V-set"/>
    <property type="match status" value="1"/>
</dbReference>
<dbReference type="Pfam" id="PF00193">
    <property type="entry name" value="Xlink"/>
    <property type="match status" value="4"/>
</dbReference>
<dbReference type="PRINTS" id="PR01265">
    <property type="entry name" value="LINKMODULE"/>
</dbReference>
<dbReference type="SMART" id="SM00032">
    <property type="entry name" value="CCP"/>
    <property type="match status" value="1"/>
</dbReference>
<dbReference type="SMART" id="SM00034">
    <property type="entry name" value="CLECT"/>
    <property type="match status" value="1"/>
</dbReference>
<dbReference type="SMART" id="SM00181">
    <property type="entry name" value="EGF"/>
    <property type="match status" value="2"/>
</dbReference>
<dbReference type="SMART" id="SM00179">
    <property type="entry name" value="EGF_CA"/>
    <property type="match status" value="2"/>
</dbReference>
<dbReference type="SMART" id="SM00409">
    <property type="entry name" value="IG"/>
    <property type="match status" value="1"/>
</dbReference>
<dbReference type="SMART" id="SM00406">
    <property type="entry name" value="IGv"/>
    <property type="match status" value="1"/>
</dbReference>
<dbReference type="SMART" id="SM00445">
    <property type="entry name" value="LINK"/>
    <property type="match status" value="4"/>
</dbReference>
<dbReference type="SUPFAM" id="SSF56436">
    <property type="entry name" value="C-type lectin-like"/>
    <property type="match status" value="5"/>
</dbReference>
<dbReference type="SUPFAM" id="SSF57535">
    <property type="entry name" value="Complement control module/SCR domain"/>
    <property type="match status" value="1"/>
</dbReference>
<dbReference type="SUPFAM" id="SSF57196">
    <property type="entry name" value="EGF/Laminin"/>
    <property type="match status" value="1"/>
</dbReference>
<dbReference type="SUPFAM" id="SSF48726">
    <property type="entry name" value="Immunoglobulin"/>
    <property type="match status" value="1"/>
</dbReference>
<dbReference type="PROSITE" id="PS00010">
    <property type="entry name" value="ASX_HYDROXYL"/>
    <property type="match status" value="1"/>
</dbReference>
<dbReference type="PROSITE" id="PS00615">
    <property type="entry name" value="C_TYPE_LECTIN_1"/>
    <property type="match status" value="1"/>
</dbReference>
<dbReference type="PROSITE" id="PS50041">
    <property type="entry name" value="C_TYPE_LECTIN_2"/>
    <property type="match status" value="1"/>
</dbReference>
<dbReference type="PROSITE" id="PS00022">
    <property type="entry name" value="EGF_1"/>
    <property type="match status" value="2"/>
</dbReference>
<dbReference type="PROSITE" id="PS50026">
    <property type="entry name" value="EGF_3"/>
    <property type="match status" value="2"/>
</dbReference>
<dbReference type="PROSITE" id="PS01187">
    <property type="entry name" value="EGF_CA"/>
    <property type="match status" value="1"/>
</dbReference>
<dbReference type="PROSITE" id="PS50835">
    <property type="entry name" value="IG_LIKE"/>
    <property type="match status" value="1"/>
</dbReference>
<dbReference type="PROSITE" id="PS00290">
    <property type="entry name" value="IG_MHC"/>
    <property type="match status" value="1"/>
</dbReference>
<dbReference type="PROSITE" id="PS01241">
    <property type="entry name" value="LINK_1"/>
    <property type="match status" value="4"/>
</dbReference>
<dbReference type="PROSITE" id="PS50963">
    <property type="entry name" value="LINK_2"/>
    <property type="match status" value="4"/>
</dbReference>
<dbReference type="PROSITE" id="PS50923">
    <property type="entry name" value="SUSHI"/>
    <property type="match status" value="1"/>
</dbReference>
<gene>
    <name type="primary">ACAN</name>
    <name type="synonym">AGC1</name>
</gene>